<protein>
    <recommendedName>
        <fullName>Protein KRBA1</fullName>
    </recommendedName>
</protein>
<sequence>MRENYETLVSVGTAELLPLSAFLSPSEPGRAVGGGSHADEGQEPAGCGDPQGGQPRHSLHLTALVQLVKEIPEFLFGEVKGAMDSPESESRGASLDGERASPEAAAAREPCPLRGLLSCLPDGPTSQPHLATTPTDSSCSSGPTGDGVQGSPLPIKTADKPWPTRKEGPGALGGEPSPPTHSPSRRKSHRGQERGTSEAGISPGNSPLQGLINCLKEILVPGPRHPETSPSFLPPLPSLGTSRLTRADLGPGSPPWAVKTEAVSGDCPLQGLLHCLKELPEAQDRHPSPSGVGNRRLQENPGAWKRGSGGPGYLLTPPPHPDLGAGGLLSVKMENSWVQSPPGPASCQPGRQPLSPSATGDTRGVPQPSWGPEAQAASASSSPLEALEACLKGIPPNGSSPSQLPPTSCSQNPQPGDSRSQKPELQPHRSHSEEATREPVLPLGLQSCVRDGPSRPLAPRGTPTSFSSSSSTDWDLDFGSPVGNQGQHPGKGSPPGSSPLQGLENCLKEIPVPVLRPAWPCSSAADRGPRRAEPRNWTADKEGLRAEACESARLGQGRGEAPTRSLHLVSPQVFTSSCVPACHQRGFKDPGATRPGVWRWLPEGSAPKPSPLHCLESALRGILPVRPLRFACVGGPSPSPSPGSSSSFSGSEGEDPRPEPDLWKPLPQERDRLPSCKPPVPLSPCPGGTPAGSSGGSPGEDPRRTEPRYCSGLGAGTAQDPCPVSQLEKRPRVSEASRGLELGHGRPRVAAKTHERLLPQGPPELPSESPPPELPPPEAAPPVLPASSLQPPCHCGKPLQQELHSLGAALAEKLDRLATALAGLAQEVATMRTQVNRLGRRPQGPGPMGQASWMWTLPRGPRWAHGPGHRHLPYWRQKGPTRPKPKILRGQGESCRAGDLQGLSRGTARRARPLPPDAPPAEPPGLHCSSSQQLLSSTPSCHAAPPAHPLLAHTGGHQSPLPPLVPAALPLQGASPPAASADADVPTSGVAPDGIPERPKEPSSLLGGVQRALQEELWGGEHRDPRWGAH</sequence>
<comment type="interaction">
    <interactant intactId="EBI-14148872">
        <id>A5PL33-2</id>
    </interactant>
    <interactant intactId="EBI-602349">
        <id>P49356</id>
        <label>FNTB</label>
    </interactant>
    <organismsDiffer>false</organismsDiffer>
    <experiments>3</experiments>
</comment>
<comment type="alternative products">
    <event type="alternative splicing"/>
    <isoform>
        <id>A5PL33-1</id>
        <name>1</name>
        <sequence type="displayed"/>
    </isoform>
    <isoform>
        <id>A5PL33-2</id>
        <name>2</name>
        <sequence type="described" ref="VSP_027780"/>
    </isoform>
    <isoform>
        <id>A5PL33-3</id>
        <name>3</name>
        <sequence type="described" ref="VSP_027779"/>
    </isoform>
</comment>
<comment type="tissue specificity">
    <text evidence="3">Expressed in brain (cerebellum).</text>
</comment>
<comment type="sequence caution" evidence="7">
    <conflict type="erroneous initiation">
        <sequence resource="EMBL-CDS" id="BAB47491"/>
    </conflict>
    <text>Extended N-terminus.</text>
</comment>
<proteinExistence type="evidence at protein level"/>
<evidence type="ECO:0000255" key="1"/>
<evidence type="ECO:0000256" key="2">
    <source>
        <dbReference type="SAM" id="MobiDB-lite"/>
    </source>
</evidence>
<evidence type="ECO:0000269" key="3">
    <source>
    </source>
</evidence>
<evidence type="ECO:0000269" key="4">
    <source>
    </source>
</evidence>
<evidence type="ECO:0000269" key="5">
    <source ref="4"/>
</evidence>
<evidence type="ECO:0000303" key="6">
    <source>
    </source>
</evidence>
<evidence type="ECO:0000305" key="7"/>
<evidence type="ECO:0007744" key="8">
    <source>
    </source>
</evidence>
<evidence type="ECO:0007744" key="9">
    <source>
    </source>
</evidence>
<accession>A5PL33</accession>
<accession>A7E2F5</accession>
<accession>E7ENE9</accession>
<accession>Q8N4X0</accession>
<accession>Q96JG5</accession>
<name>KRBA1_HUMAN</name>
<keyword id="KW-0025">Alternative splicing</keyword>
<keyword id="KW-0175">Coiled coil</keyword>
<keyword id="KW-0597">Phosphoprotein</keyword>
<keyword id="KW-1267">Proteomics identification</keyword>
<keyword id="KW-1185">Reference proteome</keyword>
<organism>
    <name type="scientific">Homo sapiens</name>
    <name type="common">Human</name>
    <dbReference type="NCBI Taxonomy" id="9606"/>
    <lineage>
        <taxon>Eukaryota</taxon>
        <taxon>Metazoa</taxon>
        <taxon>Chordata</taxon>
        <taxon>Craniata</taxon>
        <taxon>Vertebrata</taxon>
        <taxon>Euteleostomi</taxon>
        <taxon>Mammalia</taxon>
        <taxon>Eutheria</taxon>
        <taxon>Euarchontoglires</taxon>
        <taxon>Primates</taxon>
        <taxon>Haplorrhini</taxon>
        <taxon>Catarrhini</taxon>
        <taxon>Hominidae</taxon>
        <taxon>Homo</taxon>
    </lineage>
</organism>
<feature type="chain" id="PRO_0000300111" description="Protein KRBA1">
    <location>
        <begin position="1"/>
        <end position="1030"/>
    </location>
</feature>
<feature type="region of interest" description="Disordered" evidence="2">
    <location>
        <begin position="27"/>
        <end position="56"/>
    </location>
</feature>
<feature type="region of interest" description="Disordered" evidence="2">
    <location>
        <begin position="80"/>
        <end position="208"/>
    </location>
</feature>
<feature type="region of interest" description="Disordered" evidence="2">
    <location>
        <begin position="225"/>
        <end position="255"/>
    </location>
</feature>
<feature type="region of interest" description="Disordered" evidence="2">
    <location>
        <begin position="281"/>
        <end position="505"/>
    </location>
</feature>
<feature type="region of interest" description="Disordered" evidence="2">
    <location>
        <begin position="634"/>
        <end position="788"/>
    </location>
</feature>
<feature type="region of interest" description="Disordered" evidence="2">
    <location>
        <begin position="870"/>
        <end position="1030"/>
    </location>
</feature>
<feature type="coiled-coil region" evidence="1">
    <location>
        <begin position="799"/>
        <end position="832"/>
    </location>
</feature>
<feature type="compositionally biased region" description="Low complexity" evidence="2">
    <location>
        <begin position="102"/>
        <end position="114"/>
    </location>
</feature>
<feature type="compositionally biased region" description="Polar residues" evidence="2">
    <location>
        <begin position="124"/>
        <end position="143"/>
    </location>
</feature>
<feature type="compositionally biased region" description="Basic and acidic residues" evidence="2">
    <location>
        <begin position="157"/>
        <end position="168"/>
    </location>
</feature>
<feature type="compositionally biased region" description="Low complexity" evidence="2">
    <location>
        <begin position="372"/>
        <end position="389"/>
    </location>
</feature>
<feature type="compositionally biased region" description="Polar residues" evidence="2">
    <location>
        <begin position="397"/>
        <end position="418"/>
    </location>
</feature>
<feature type="compositionally biased region" description="Basic and acidic residues" evidence="2">
    <location>
        <begin position="419"/>
        <end position="437"/>
    </location>
</feature>
<feature type="compositionally biased region" description="Low complexity" evidence="2">
    <location>
        <begin position="485"/>
        <end position="502"/>
    </location>
</feature>
<feature type="compositionally biased region" description="Low complexity" evidence="2">
    <location>
        <begin position="642"/>
        <end position="651"/>
    </location>
</feature>
<feature type="compositionally biased region" description="Basic and acidic residues" evidence="2">
    <location>
        <begin position="654"/>
        <end position="674"/>
    </location>
</feature>
<feature type="compositionally biased region" description="Gly residues" evidence="2">
    <location>
        <begin position="689"/>
        <end position="698"/>
    </location>
</feature>
<feature type="compositionally biased region" description="Pro residues" evidence="2">
    <location>
        <begin position="760"/>
        <end position="784"/>
    </location>
</feature>
<feature type="compositionally biased region" description="Basic residues" evidence="2">
    <location>
        <begin position="870"/>
        <end position="887"/>
    </location>
</feature>
<feature type="compositionally biased region" description="Pro residues" evidence="2">
    <location>
        <begin position="913"/>
        <end position="923"/>
    </location>
</feature>
<feature type="compositionally biased region" description="Low complexity" evidence="2">
    <location>
        <begin position="929"/>
        <end position="953"/>
    </location>
</feature>
<feature type="compositionally biased region" description="Low complexity" evidence="2">
    <location>
        <begin position="966"/>
        <end position="984"/>
    </location>
</feature>
<feature type="compositionally biased region" description="Basic and acidic residues" evidence="2">
    <location>
        <begin position="1019"/>
        <end position="1030"/>
    </location>
</feature>
<feature type="modified residue" description="Phosphoserine" evidence="9">
    <location>
        <position position="101"/>
    </location>
</feature>
<feature type="modified residue" description="Phosphoserine" evidence="9">
    <location>
        <position position="177"/>
    </location>
</feature>
<feature type="modified residue" description="Phosphoserine" evidence="9">
    <location>
        <position position="182"/>
    </location>
</feature>
<feature type="modified residue" description="Phosphoserine" evidence="9">
    <location>
        <position position="184"/>
    </location>
</feature>
<feature type="modified residue" description="Phosphoserine" evidence="9">
    <location>
        <position position="229"/>
    </location>
</feature>
<feature type="modified residue" description="Phosphoserine" evidence="8 9">
    <location>
        <position position="253"/>
    </location>
</feature>
<feature type="modified residue" description="Phosphoserine" evidence="9">
    <location>
        <position position="355"/>
    </location>
</feature>
<feature type="splice variant" id="VSP_027780" description="In isoform 2." evidence="6">
    <location>
        <position position="106"/>
    </location>
</feature>
<feature type="splice variant" id="VSP_027779" description="In isoform 3." evidence="6">
    <location>
        <begin position="543"/>
        <end position="603"/>
    </location>
</feature>
<feature type="sequence variant" id="VAR_056922" description="In dbSNP:rs7791608.">
    <original>H</original>
    <variation>R</variation>
    <location>
        <position position="320"/>
    </location>
</feature>
<feature type="sequence variant" id="VAR_068701" description="In dbSNP:rs709065." evidence="3 4 5">
    <original>D</original>
    <variation>E</variation>
    <location>
        <position position="661"/>
    </location>
</feature>
<dbReference type="EMBL" id="AB058765">
    <property type="protein sequence ID" value="BAB47491.2"/>
    <property type="status" value="ALT_INIT"/>
    <property type="molecule type" value="mRNA"/>
</dbReference>
<dbReference type="EMBL" id="AC004897">
    <property type="status" value="NOT_ANNOTATED_CDS"/>
    <property type="molecule type" value="Genomic_DNA"/>
</dbReference>
<dbReference type="EMBL" id="CH471146">
    <property type="protein sequence ID" value="EAW80035.1"/>
    <property type="molecule type" value="Genomic_DNA"/>
</dbReference>
<dbReference type="EMBL" id="BC033229">
    <property type="protein sequence ID" value="AAH33229.1"/>
    <property type="molecule type" value="mRNA"/>
</dbReference>
<dbReference type="EMBL" id="BC041587">
    <property type="protein sequence ID" value="AAH41587.1"/>
    <property type="molecule type" value="mRNA"/>
</dbReference>
<dbReference type="EMBL" id="BC142722">
    <property type="protein sequence ID" value="AAI42723.1"/>
    <property type="molecule type" value="mRNA"/>
</dbReference>
<dbReference type="EMBL" id="BC146667">
    <property type="protein sequence ID" value="AAI46668.1"/>
    <property type="molecule type" value="mRNA"/>
</dbReference>
<dbReference type="EMBL" id="BC150330">
    <property type="protein sequence ID" value="AAI50331.1"/>
    <property type="molecule type" value="mRNA"/>
</dbReference>
<dbReference type="EMBL" id="BC152409">
    <property type="protein sequence ID" value="AAI52410.1"/>
    <property type="molecule type" value="mRNA"/>
</dbReference>
<dbReference type="CCDS" id="CCDS75674.1">
    <molecule id="A5PL33-1"/>
</dbReference>
<dbReference type="CCDS" id="CCDS94228.1">
    <molecule id="A5PL33-3"/>
</dbReference>
<dbReference type="RefSeq" id="NP_001277116.1">
    <property type="nucleotide sequence ID" value="NM_001290187.1"/>
</dbReference>
<dbReference type="RefSeq" id="NP_001381411.1">
    <molecule id="A5PL33-2"/>
    <property type="nucleotide sequence ID" value="NM_001394482.1"/>
</dbReference>
<dbReference type="RefSeq" id="NP_001381412.1">
    <molecule id="A5PL33-2"/>
    <property type="nucleotide sequence ID" value="NM_001394483.1"/>
</dbReference>
<dbReference type="RefSeq" id="NP_001381414.1">
    <molecule id="A5PL33-3"/>
    <property type="nucleotide sequence ID" value="NM_001394485.1"/>
</dbReference>
<dbReference type="RefSeq" id="NP_115923.2">
    <molecule id="A5PL33-1"/>
    <property type="nucleotide sequence ID" value="NM_032534.4"/>
</dbReference>
<dbReference type="RefSeq" id="XP_047276924.1">
    <molecule id="A5PL33-1"/>
    <property type="nucleotide sequence ID" value="XM_047420968.1"/>
</dbReference>
<dbReference type="SMR" id="A5PL33"/>
<dbReference type="BioGRID" id="124155">
    <property type="interactions" value="41"/>
</dbReference>
<dbReference type="FunCoup" id="A5PL33">
    <property type="interactions" value="280"/>
</dbReference>
<dbReference type="IntAct" id="A5PL33">
    <property type="interactions" value="39"/>
</dbReference>
<dbReference type="MINT" id="A5PL33"/>
<dbReference type="STRING" id="9606.ENSP00000418647"/>
<dbReference type="GlyGen" id="A5PL33">
    <property type="glycosylation" value="1 site"/>
</dbReference>
<dbReference type="iPTMnet" id="A5PL33"/>
<dbReference type="PhosphoSitePlus" id="A5PL33"/>
<dbReference type="BioMuta" id="KRBA1"/>
<dbReference type="jPOST" id="A5PL33"/>
<dbReference type="MassIVE" id="A5PL33"/>
<dbReference type="PaxDb" id="9606-ENSP00000317165"/>
<dbReference type="PeptideAtlas" id="A5PL33"/>
<dbReference type="ProteomicsDB" id="17142"/>
<dbReference type="ProteomicsDB" id="728">
    <molecule id="A5PL33-1"/>
</dbReference>
<dbReference type="ProteomicsDB" id="729">
    <molecule id="A5PL33-2"/>
</dbReference>
<dbReference type="ProteomicsDB" id="730">
    <molecule id="A5PL33-3"/>
</dbReference>
<dbReference type="Antibodypedia" id="10441">
    <property type="antibodies" value="13 antibodies from 8 providers"/>
</dbReference>
<dbReference type="DNASU" id="84626"/>
<dbReference type="Ensembl" id="ENST00000319551.12">
    <molecule id="A5PL33-1"/>
    <property type="protein sequence ID" value="ENSP00000317165.9"/>
    <property type="gene ID" value="ENSG00000133619.18"/>
</dbReference>
<dbReference type="Ensembl" id="ENST00000485033.6">
    <molecule id="A5PL33-3"/>
    <property type="protein sequence ID" value="ENSP00000420112.2"/>
    <property type="gene ID" value="ENSG00000133619.18"/>
</dbReference>
<dbReference type="GeneID" id="84626"/>
<dbReference type="KEGG" id="hsa:84626"/>
<dbReference type="UCSC" id="uc033api.1">
    <molecule id="A5PL33-1"/>
    <property type="organism name" value="human"/>
</dbReference>
<dbReference type="AGR" id="HGNC:22228"/>
<dbReference type="CTD" id="84626"/>
<dbReference type="DisGeNET" id="84626"/>
<dbReference type="GeneCards" id="KRBA1"/>
<dbReference type="HGNC" id="HGNC:22228">
    <property type="gene designation" value="KRBA1"/>
</dbReference>
<dbReference type="HPA" id="ENSG00000133619">
    <property type="expression patterns" value="Tissue enhanced (heart)"/>
</dbReference>
<dbReference type="neXtProt" id="NX_A5PL33"/>
<dbReference type="OpenTargets" id="ENSG00000133619"/>
<dbReference type="PharmGKB" id="PA162393641"/>
<dbReference type="VEuPathDB" id="HostDB:ENSG00000133619"/>
<dbReference type="eggNOG" id="ENOG502S92J">
    <property type="taxonomic scope" value="Eukaryota"/>
</dbReference>
<dbReference type="GeneTree" id="ENSGT00390000006211"/>
<dbReference type="HOGENOM" id="CLU_299337_0_0_1"/>
<dbReference type="InParanoid" id="A5PL33"/>
<dbReference type="OrthoDB" id="9449942at2759"/>
<dbReference type="PAN-GO" id="A5PL33">
    <property type="GO annotations" value="0 GO annotations based on evolutionary models"/>
</dbReference>
<dbReference type="PathwayCommons" id="A5PL33"/>
<dbReference type="Reactome" id="R-HSA-212436">
    <property type="pathway name" value="Generic Transcription Pathway"/>
</dbReference>
<dbReference type="SignaLink" id="A5PL33"/>
<dbReference type="BioGRID-ORCS" id="84626">
    <property type="hits" value="14 hits in 359 CRISPR screens"/>
</dbReference>
<dbReference type="ChiTaRS" id="KRBA1">
    <property type="organism name" value="human"/>
</dbReference>
<dbReference type="GenomeRNAi" id="84626"/>
<dbReference type="Pharos" id="A5PL33">
    <property type="development level" value="Tdark"/>
</dbReference>
<dbReference type="PRO" id="PR:A5PL33"/>
<dbReference type="Proteomes" id="UP000005640">
    <property type="component" value="Chromosome 7"/>
</dbReference>
<dbReference type="RNAct" id="A5PL33">
    <property type="molecule type" value="protein"/>
</dbReference>
<dbReference type="Bgee" id="ENSG00000133619">
    <property type="expression patterns" value="Expressed in cardiac muscle of right atrium and 151 other cell types or tissues"/>
</dbReference>
<dbReference type="ExpressionAtlas" id="A5PL33">
    <property type="expression patterns" value="baseline and differential"/>
</dbReference>
<dbReference type="InterPro" id="IPR040095">
    <property type="entry name" value="KRBA1"/>
</dbReference>
<dbReference type="InterPro" id="IPR029317">
    <property type="entry name" value="KRBA1_rpt"/>
</dbReference>
<dbReference type="PANTHER" id="PTHR22740">
    <property type="entry name" value="PROTEIN KRBA1"/>
    <property type="match status" value="1"/>
</dbReference>
<dbReference type="PANTHER" id="PTHR22740:SF3">
    <property type="entry name" value="PROTEIN KRBA1"/>
    <property type="match status" value="1"/>
</dbReference>
<dbReference type="Pfam" id="PF15287">
    <property type="entry name" value="KRBA1"/>
    <property type="match status" value="6"/>
</dbReference>
<dbReference type="SMART" id="SM01258">
    <property type="entry name" value="KRBA1"/>
    <property type="match status" value="6"/>
</dbReference>
<reference key="1">
    <citation type="journal article" date="2001" name="DNA Res.">
        <title>Prediction of the coding sequences of unidentified human genes. XX. The complete sequences of 100 new cDNA clones from brain which code for large proteins in vitro.</title>
        <authorList>
            <person name="Nagase T."/>
            <person name="Nakayama M."/>
            <person name="Nakajima D."/>
            <person name="Kikuno R."/>
            <person name="Ohara O."/>
        </authorList>
    </citation>
    <scope>NUCLEOTIDE SEQUENCE [LARGE SCALE MRNA] (ISOFORM 1)</scope>
    <scope>TISSUE SPECIFICITY</scope>
    <scope>VARIANT GLU-661</scope>
    <source>
        <tissue>Brain</tissue>
    </source>
</reference>
<reference key="2">
    <citation type="journal article" date="2002" name="DNA Res.">
        <title>Construction of expression-ready cDNA clones for KIAA genes: manual curation of 330 KIAA cDNA clones.</title>
        <authorList>
            <person name="Nakajima D."/>
            <person name="Okazaki N."/>
            <person name="Yamakawa H."/>
            <person name="Kikuno R."/>
            <person name="Ohara O."/>
            <person name="Nagase T."/>
        </authorList>
    </citation>
    <scope>SEQUENCE REVISION</scope>
</reference>
<reference key="3">
    <citation type="journal article" date="2003" name="Nature">
        <title>The DNA sequence of human chromosome 7.</title>
        <authorList>
            <person name="Hillier L.W."/>
            <person name="Fulton R.S."/>
            <person name="Fulton L.A."/>
            <person name="Graves T.A."/>
            <person name="Pepin K.H."/>
            <person name="Wagner-McPherson C."/>
            <person name="Layman D."/>
            <person name="Maas J."/>
            <person name="Jaeger S."/>
            <person name="Walker R."/>
            <person name="Wylie K."/>
            <person name="Sekhon M."/>
            <person name="Becker M.C."/>
            <person name="O'Laughlin M.D."/>
            <person name="Schaller M.E."/>
            <person name="Fewell G.A."/>
            <person name="Delehaunty K.D."/>
            <person name="Miner T.L."/>
            <person name="Nash W.E."/>
            <person name="Cordes M."/>
            <person name="Du H."/>
            <person name="Sun H."/>
            <person name="Edwards J."/>
            <person name="Bradshaw-Cordum H."/>
            <person name="Ali J."/>
            <person name="Andrews S."/>
            <person name="Isak A."/>
            <person name="Vanbrunt A."/>
            <person name="Nguyen C."/>
            <person name="Du F."/>
            <person name="Lamar B."/>
            <person name="Courtney L."/>
            <person name="Kalicki J."/>
            <person name="Ozersky P."/>
            <person name="Bielicki L."/>
            <person name="Scott K."/>
            <person name="Holmes A."/>
            <person name="Harkins R."/>
            <person name="Harris A."/>
            <person name="Strong C.M."/>
            <person name="Hou S."/>
            <person name="Tomlinson C."/>
            <person name="Dauphin-Kohlberg S."/>
            <person name="Kozlowicz-Reilly A."/>
            <person name="Leonard S."/>
            <person name="Rohlfing T."/>
            <person name="Rock S.M."/>
            <person name="Tin-Wollam A.-M."/>
            <person name="Abbott A."/>
            <person name="Minx P."/>
            <person name="Maupin R."/>
            <person name="Strowmatt C."/>
            <person name="Latreille P."/>
            <person name="Miller N."/>
            <person name="Johnson D."/>
            <person name="Murray J."/>
            <person name="Woessner J.P."/>
            <person name="Wendl M.C."/>
            <person name="Yang S.-P."/>
            <person name="Schultz B.R."/>
            <person name="Wallis J.W."/>
            <person name="Spieth J."/>
            <person name="Bieri T.A."/>
            <person name="Nelson J.O."/>
            <person name="Berkowicz N."/>
            <person name="Wohldmann P.E."/>
            <person name="Cook L.L."/>
            <person name="Hickenbotham M.T."/>
            <person name="Eldred J."/>
            <person name="Williams D."/>
            <person name="Bedell J.A."/>
            <person name="Mardis E.R."/>
            <person name="Clifton S.W."/>
            <person name="Chissoe S.L."/>
            <person name="Marra M.A."/>
            <person name="Raymond C."/>
            <person name="Haugen E."/>
            <person name="Gillett W."/>
            <person name="Zhou Y."/>
            <person name="James R."/>
            <person name="Phelps K."/>
            <person name="Iadanoto S."/>
            <person name="Bubb K."/>
            <person name="Simms E."/>
            <person name="Levy R."/>
            <person name="Clendenning J."/>
            <person name="Kaul R."/>
            <person name="Kent W.J."/>
            <person name="Furey T.S."/>
            <person name="Baertsch R.A."/>
            <person name="Brent M.R."/>
            <person name="Keibler E."/>
            <person name="Flicek P."/>
            <person name="Bork P."/>
            <person name="Suyama M."/>
            <person name="Bailey J.A."/>
            <person name="Portnoy M.E."/>
            <person name="Torrents D."/>
            <person name="Chinwalla A.T."/>
            <person name="Gish W.R."/>
            <person name="Eddy S.R."/>
            <person name="McPherson J.D."/>
            <person name="Olson M.V."/>
            <person name="Eichler E.E."/>
            <person name="Green E.D."/>
            <person name="Waterston R.H."/>
            <person name="Wilson R.K."/>
        </authorList>
    </citation>
    <scope>NUCLEOTIDE SEQUENCE [LARGE SCALE GENOMIC DNA]</scope>
</reference>
<reference key="4">
    <citation type="submission" date="2005-09" db="EMBL/GenBank/DDBJ databases">
        <authorList>
            <person name="Mural R.J."/>
            <person name="Istrail S."/>
            <person name="Sutton G.G."/>
            <person name="Florea L."/>
            <person name="Halpern A.L."/>
            <person name="Mobarry C.M."/>
            <person name="Lippert R."/>
            <person name="Walenz B."/>
            <person name="Shatkay H."/>
            <person name="Dew I."/>
            <person name="Miller J.R."/>
            <person name="Flanigan M.J."/>
            <person name="Edwards N.J."/>
            <person name="Bolanos R."/>
            <person name="Fasulo D."/>
            <person name="Halldorsson B.V."/>
            <person name="Hannenhalli S."/>
            <person name="Turner R."/>
            <person name="Yooseph S."/>
            <person name="Lu F."/>
            <person name="Nusskern D.R."/>
            <person name="Shue B.C."/>
            <person name="Zheng X.H."/>
            <person name="Zhong F."/>
            <person name="Delcher A.L."/>
            <person name="Huson D.H."/>
            <person name="Kravitz S.A."/>
            <person name="Mouchard L."/>
            <person name="Reinert K."/>
            <person name="Remington K.A."/>
            <person name="Clark A.G."/>
            <person name="Waterman M.S."/>
            <person name="Eichler E.E."/>
            <person name="Adams M.D."/>
            <person name="Hunkapiller M.W."/>
            <person name="Myers E.W."/>
            <person name="Venter J.C."/>
        </authorList>
    </citation>
    <scope>NUCLEOTIDE SEQUENCE [LARGE SCALE GENOMIC DNA]</scope>
    <scope>VARIANT GLU-661</scope>
</reference>
<reference key="5">
    <citation type="journal article" date="2004" name="Genome Res.">
        <title>The status, quality, and expansion of the NIH full-length cDNA project: the Mammalian Gene Collection (MGC).</title>
        <authorList>
            <consortium name="The MGC Project Team"/>
        </authorList>
    </citation>
    <scope>NUCLEOTIDE SEQUENCE [LARGE SCALE MRNA] (ISOFORMS 1 AND 2)</scope>
    <scope>NUCLEOTIDE SEQUENCE [LARGE SCALE MRNA] OF 300-1029 (ISOFORM 3)</scope>
    <scope>VARIANT GLU-661</scope>
    <source>
        <tissue>Pancreas</tissue>
    </source>
</reference>
<reference key="6">
    <citation type="journal article" date="2009" name="Sci. Signal.">
        <title>Quantitative phosphoproteomic analysis of T cell receptor signaling reveals system-wide modulation of protein-protein interactions.</title>
        <authorList>
            <person name="Mayya V."/>
            <person name="Lundgren D.H."/>
            <person name="Hwang S.-I."/>
            <person name="Rezaul K."/>
            <person name="Wu L."/>
            <person name="Eng J.K."/>
            <person name="Rodionov V."/>
            <person name="Han D.K."/>
        </authorList>
    </citation>
    <scope>PHOSPHORYLATION [LARGE SCALE ANALYSIS] AT SER-253</scope>
    <scope>IDENTIFICATION BY MASS SPECTROMETRY [LARGE SCALE ANALYSIS]</scope>
    <source>
        <tissue>Leukemic T-cell</tissue>
    </source>
</reference>
<reference key="7">
    <citation type="journal article" date="2013" name="J. Proteome Res.">
        <title>Toward a comprehensive characterization of a human cancer cell phosphoproteome.</title>
        <authorList>
            <person name="Zhou H."/>
            <person name="Di Palma S."/>
            <person name="Preisinger C."/>
            <person name="Peng M."/>
            <person name="Polat A.N."/>
            <person name="Heck A.J."/>
            <person name="Mohammed S."/>
        </authorList>
    </citation>
    <scope>PHOSPHORYLATION [LARGE SCALE ANALYSIS] AT SER-101; SER-177; SER-182; SER-184; SER-229; SER-253 AND SER-355</scope>
    <scope>IDENTIFICATION BY MASS SPECTROMETRY [LARGE SCALE ANALYSIS]</scope>
    <source>
        <tissue>Erythroleukemia</tissue>
    </source>
</reference>
<gene>
    <name type="primary">KRBA1</name>
    <name type="synonym">KIAA1862</name>
</gene>